<name>MNMC_PSEA6</name>
<reference key="1">
    <citation type="submission" date="2006-06" db="EMBL/GenBank/DDBJ databases">
        <title>Complete sequence of Pseudoalteromonas atlantica T6c.</title>
        <authorList>
            <consortium name="US DOE Joint Genome Institute"/>
            <person name="Copeland A."/>
            <person name="Lucas S."/>
            <person name="Lapidus A."/>
            <person name="Barry K."/>
            <person name="Detter J.C."/>
            <person name="Glavina del Rio T."/>
            <person name="Hammon N."/>
            <person name="Israni S."/>
            <person name="Dalin E."/>
            <person name="Tice H."/>
            <person name="Pitluck S."/>
            <person name="Saunders E."/>
            <person name="Brettin T."/>
            <person name="Bruce D."/>
            <person name="Han C."/>
            <person name="Tapia R."/>
            <person name="Gilna P."/>
            <person name="Schmutz J."/>
            <person name="Larimer F."/>
            <person name="Land M."/>
            <person name="Hauser L."/>
            <person name="Kyrpides N."/>
            <person name="Kim E."/>
            <person name="Karls A.C."/>
            <person name="Bartlett D."/>
            <person name="Higgins B.P."/>
            <person name="Richardson P."/>
        </authorList>
    </citation>
    <scope>NUCLEOTIDE SEQUENCE [LARGE SCALE GENOMIC DNA]</scope>
    <source>
        <strain>T6c / ATCC BAA-1087</strain>
    </source>
</reference>
<keyword id="KW-0963">Cytoplasm</keyword>
<keyword id="KW-0274">FAD</keyword>
<keyword id="KW-0285">Flavoprotein</keyword>
<keyword id="KW-0489">Methyltransferase</keyword>
<keyword id="KW-0511">Multifunctional enzyme</keyword>
<keyword id="KW-0560">Oxidoreductase</keyword>
<keyword id="KW-0949">S-adenosyl-L-methionine</keyword>
<keyword id="KW-0808">Transferase</keyword>
<keyword id="KW-0819">tRNA processing</keyword>
<accession>Q15QE8</accession>
<comment type="function">
    <text evidence="1">Catalyzes the last two steps in the biosynthesis of 5-methylaminomethyl-2-thiouridine (mnm(5)s(2)U) at the wobble position (U34) in tRNA. Catalyzes the FAD-dependent demodification of cmnm(5)s(2)U34 to nm(5)s(2)U34, followed by the transfer of a methyl group from S-adenosyl-L-methionine to nm(5)s(2)U34, to form mnm(5)s(2)U34.</text>
</comment>
<comment type="catalytic activity">
    <reaction evidence="1">
        <text>5-aminomethyl-2-thiouridine(34) in tRNA + S-adenosyl-L-methionine = 5-methylaminomethyl-2-thiouridine(34) in tRNA + S-adenosyl-L-homocysteine + H(+)</text>
        <dbReference type="Rhea" id="RHEA:19569"/>
        <dbReference type="Rhea" id="RHEA-COMP:10195"/>
        <dbReference type="Rhea" id="RHEA-COMP:10197"/>
        <dbReference type="ChEBI" id="CHEBI:15378"/>
        <dbReference type="ChEBI" id="CHEBI:57856"/>
        <dbReference type="ChEBI" id="CHEBI:59789"/>
        <dbReference type="ChEBI" id="CHEBI:74454"/>
        <dbReference type="ChEBI" id="CHEBI:74455"/>
        <dbReference type="EC" id="2.1.1.61"/>
    </reaction>
</comment>
<comment type="cofactor">
    <cofactor evidence="1">
        <name>FAD</name>
        <dbReference type="ChEBI" id="CHEBI:57692"/>
    </cofactor>
</comment>
<comment type="subcellular location">
    <subcellularLocation>
        <location evidence="1">Cytoplasm</location>
    </subcellularLocation>
</comment>
<comment type="similarity">
    <text evidence="1">In the N-terminal section; belongs to the methyltransferase superfamily. tRNA (mnm(5)s(2)U34)-methyltransferase family.</text>
</comment>
<comment type="similarity">
    <text evidence="1">In the C-terminal section; belongs to the DAO family.</text>
</comment>
<feature type="chain" id="PRO_0000348009" description="tRNA 5-methylaminomethyl-2-thiouridine biosynthesis bifunctional protein MnmC">
    <location>
        <begin position="1"/>
        <end position="705"/>
    </location>
</feature>
<feature type="region of interest" description="tRNA (mnm(5)s(2)U34)-methyltransferase">
    <location>
        <begin position="1"/>
        <end position="241"/>
    </location>
</feature>
<feature type="region of interest" description="FAD-dependent cmnm(5)s(2)U34 oxidoreductase">
    <location>
        <begin position="289"/>
        <end position="705"/>
    </location>
</feature>
<protein>
    <recommendedName>
        <fullName evidence="1">tRNA 5-methylaminomethyl-2-thiouridine biosynthesis bifunctional protein MnmC</fullName>
        <shortName evidence="1">tRNA mnm(5)s(2)U biosynthesis bifunctional protein</shortName>
    </recommendedName>
    <domain>
        <recommendedName>
            <fullName evidence="1">tRNA (mnm(5)s(2)U34)-methyltransferase</fullName>
            <ecNumber evidence="1">2.1.1.61</ecNumber>
        </recommendedName>
    </domain>
    <domain>
        <recommendedName>
            <fullName evidence="1">FAD-dependent cmnm(5)s(2)U34 oxidoreductase</fullName>
            <ecNumber evidence="1">1.5.-.-</ecNumber>
        </recommendedName>
    </domain>
</protein>
<evidence type="ECO:0000255" key="1">
    <source>
        <dbReference type="HAMAP-Rule" id="MF_01102"/>
    </source>
</evidence>
<proteinExistence type="inferred from homology"/>
<gene>
    <name evidence="1" type="primary">mnmC</name>
    <name type="ordered locus">Patl_3384</name>
</gene>
<dbReference type="EC" id="2.1.1.61" evidence="1"/>
<dbReference type="EC" id="1.5.-.-" evidence="1"/>
<dbReference type="EMBL" id="CP000388">
    <property type="protein sequence ID" value="ABG41890.1"/>
    <property type="molecule type" value="Genomic_DNA"/>
</dbReference>
<dbReference type="RefSeq" id="WP_011576119.1">
    <property type="nucleotide sequence ID" value="NC_008228.1"/>
</dbReference>
<dbReference type="SMR" id="Q15QE8"/>
<dbReference type="STRING" id="342610.Patl_3384"/>
<dbReference type="KEGG" id="pat:Patl_3384"/>
<dbReference type="eggNOG" id="COG0665">
    <property type="taxonomic scope" value="Bacteria"/>
</dbReference>
<dbReference type="eggNOG" id="COG4121">
    <property type="taxonomic scope" value="Bacteria"/>
</dbReference>
<dbReference type="HOGENOM" id="CLU_022427_2_1_6"/>
<dbReference type="OrthoDB" id="9786494at2"/>
<dbReference type="Proteomes" id="UP000001981">
    <property type="component" value="Chromosome"/>
</dbReference>
<dbReference type="GO" id="GO:0005737">
    <property type="term" value="C:cytoplasm"/>
    <property type="evidence" value="ECO:0007669"/>
    <property type="project" value="UniProtKB-SubCell"/>
</dbReference>
<dbReference type="GO" id="GO:0050660">
    <property type="term" value="F:flavin adenine dinucleotide binding"/>
    <property type="evidence" value="ECO:0007669"/>
    <property type="project" value="UniProtKB-UniRule"/>
</dbReference>
<dbReference type="GO" id="GO:0016645">
    <property type="term" value="F:oxidoreductase activity, acting on the CH-NH group of donors"/>
    <property type="evidence" value="ECO:0007669"/>
    <property type="project" value="InterPro"/>
</dbReference>
<dbReference type="GO" id="GO:0004808">
    <property type="term" value="F:tRNA (5-methylaminomethyl-2-thiouridylate)(34)-methyltransferase activity"/>
    <property type="evidence" value="ECO:0007669"/>
    <property type="project" value="UniProtKB-EC"/>
</dbReference>
<dbReference type="GO" id="GO:0032259">
    <property type="term" value="P:methylation"/>
    <property type="evidence" value="ECO:0007669"/>
    <property type="project" value="UniProtKB-KW"/>
</dbReference>
<dbReference type="GO" id="GO:0002097">
    <property type="term" value="P:tRNA wobble base modification"/>
    <property type="evidence" value="ECO:0007669"/>
    <property type="project" value="UniProtKB-UniRule"/>
</dbReference>
<dbReference type="Gene3D" id="3.30.9.10">
    <property type="entry name" value="D-Amino Acid Oxidase, subunit A, domain 2"/>
    <property type="match status" value="1"/>
</dbReference>
<dbReference type="Gene3D" id="3.50.50.60">
    <property type="entry name" value="FAD/NAD(P)-binding domain"/>
    <property type="match status" value="1"/>
</dbReference>
<dbReference type="Gene3D" id="3.40.50.150">
    <property type="entry name" value="Vaccinia Virus protein VP39"/>
    <property type="match status" value="1"/>
</dbReference>
<dbReference type="HAMAP" id="MF_01102">
    <property type="entry name" value="MnmC"/>
    <property type="match status" value="1"/>
</dbReference>
<dbReference type="InterPro" id="IPR006076">
    <property type="entry name" value="FAD-dep_OxRdtase"/>
</dbReference>
<dbReference type="InterPro" id="IPR036188">
    <property type="entry name" value="FAD/NAD-bd_sf"/>
</dbReference>
<dbReference type="InterPro" id="IPR008471">
    <property type="entry name" value="MnmC-like_methylTransf"/>
</dbReference>
<dbReference type="InterPro" id="IPR029063">
    <property type="entry name" value="SAM-dependent_MTases_sf"/>
</dbReference>
<dbReference type="InterPro" id="IPR023032">
    <property type="entry name" value="tRNA_MAMT_biosynth_bifunc_MnmC"/>
</dbReference>
<dbReference type="InterPro" id="IPR047785">
    <property type="entry name" value="tRNA_MNMC2"/>
</dbReference>
<dbReference type="InterPro" id="IPR017610">
    <property type="entry name" value="tRNA_S-uridine_synth_MnmC_C"/>
</dbReference>
<dbReference type="NCBIfam" id="TIGR03197">
    <property type="entry name" value="MnmC_Cterm"/>
    <property type="match status" value="1"/>
</dbReference>
<dbReference type="NCBIfam" id="NF002481">
    <property type="entry name" value="PRK01747.1-2"/>
    <property type="match status" value="1"/>
</dbReference>
<dbReference type="NCBIfam" id="NF033855">
    <property type="entry name" value="tRNA_MNMC2"/>
    <property type="match status" value="1"/>
</dbReference>
<dbReference type="PANTHER" id="PTHR13847">
    <property type="entry name" value="SARCOSINE DEHYDROGENASE-RELATED"/>
    <property type="match status" value="1"/>
</dbReference>
<dbReference type="PANTHER" id="PTHR13847:SF283">
    <property type="entry name" value="TRNA 5-METHYLAMINOMETHYL-2-THIOURIDINE BIOSYNTHESIS BIFUNCTIONAL PROTEIN MNMC"/>
    <property type="match status" value="1"/>
</dbReference>
<dbReference type="Pfam" id="PF01266">
    <property type="entry name" value="DAO"/>
    <property type="match status" value="1"/>
</dbReference>
<dbReference type="Pfam" id="PF05430">
    <property type="entry name" value="Methyltransf_30"/>
    <property type="match status" value="1"/>
</dbReference>
<dbReference type="SUPFAM" id="SSF51905">
    <property type="entry name" value="FAD/NAD(P)-binding domain"/>
    <property type="match status" value="1"/>
</dbReference>
<organism>
    <name type="scientific">Pseudoalteromonas atlantica (strain T6c / ATCC BAA-1087)</name>
    <dbReference type="NCBI Taxonomy" id="3042615"/>
    <lineage>
        <taxon>Bacteria</taxon>
        <taxon>Pseudomonadati</taxon>
        <taxon>Pseudomonadota</taxon>
        <taxon>Gammaproteobacteria</taxon>
        <taxon>Alteromonadales</taxon>
        <taxon>Alteromonadaceae</taxon>
        <taxon>Paraglaciecola</taxon>
    </lineage>
</organism>
<sequence length="705" mass="77974">MTIKTADIQFNADGTPIATNFDDVYFSSFDGAAETEYVFLHNNLLPQRWQQWSKPTFVIAETGFGTGLNLLVTLAVFKQHLAQHPASTFTLHYISTEKFPLTHTDLVQALNAFVQFEDDAKALIAQYPMPLDGCHRMSFLNNRVIVDLWLGDIHDSLPQWHTNENGLVDAWYLDGFAPSKNPQMWSPQLFEQMARLASNGCTFATFTAAGFVKRGLRDAGFEVEKRKGHGRKREMLAGIIARELETKVNRQQARYYQRGAYMNSTSVNTRCAENHAQTALASKPKVAIIGAGIAGASMAYAMAKKGYDCDIYFNDATPAQGASGNPQAGFYPQLNVDASHASQINAHSFVYAANQYRQLQSQGFHFAHQWCGVLQLGFKPALAERYAKLTESQLWPGELVRYVKPSEAAQLANCEMPYSGLFMPLGGWIDPAQLVDALFDAAAKLSQVRLYSHHALNGIEQKNVSITAQENTRWQLHFEASEATSGMNKNTSLAQADIVIYATGAQSHDIAALADFPLRMVRGQVEAVPTQTALSKLNTVLCHKGYLTPEYNGQHALGSTYVKNDLSTDYRLSEQDKNLATHYQSLSDCQWAQEVVGNAQGRAAVRCSSPDHLPLVGALADIEKQKKELSDLYKALPLSYYPKGSNMNNVFVLTGLGSRGLTTAPLMAEVLASQISGQPLPMANDLLNTLNPNRFLIRQLIRREV</sequence>